<feature type="chain" id="PRO_1000088156" description="7-cyano-7-deazaguanine synthase">
    <location>
        <begin position="1"/>
        <end position="220"/>
    </location>
</feature>
<feature type="binding site" evidence="1">
    <location>
        <begin position="10"/>
        <end position="20"/>
    </location>
    <ligand>
        <name>ATP</name>
        <dbReference type="ChEBI" id="CHEBI:30616"/>
    </ligand>
</feature>
<feature type="binding site" evidence="1">
    <location>
        <position position="188"/>
    </location>
    <ligand>
        <name>Zn(2+)</name>
        <dbReference type="ChEBI" id="CHEBI:29105"/>
    </ligand>
</feature>
<feature type="binding site" evidence="1">
    <location>
        <position position="197"/>
    </location>
    <ligand>
        <name>Zn(2+)</name>
        <dbReference type="ChEBI" id="CHEBI:29105"/>
    </ligand>
</feature>
<feature type="binding site" evidence="1">
    <location>
        <position position="200"/>
    </location>
    <ligand>
        <name>Zn(2+)</name>
        <dbReference type="ChEBI" id="CHEBI:29105"/>
    </ligand>
</feature>
<feature type="binding site" evidence="1">
    <location>
        <position position="203"/>
    </location>
    <ligand>
        <name>Zn(2+)</name>
        <dbReference type="ChEBI" id="CHEBI:29105"/>
    </ligand>
</feature>
<organism>
    <name type="scientific">Neisseria meningitidis serogroup C (strain 053442)</name>
    <dbReference type="NCBI Taxonomy" id="374833"/>
    <lineage>
        <taxon>Bacteria</taxon>
        <taxon>Pseudomonadati</taxon>
        <taxon>Pseudomonadota</taxon>
        <taxon>Betaproteobacteria</taxon>
        <taxon>Neisseriales</taxon>
        <taxon>Neisseriaceae</taxon>
        <taxon>Neisseria</taxon>
    </lineage>
</organism>
<name>QUEC_NEIM0</name>
<accession>A9M1Y9</accession>
<proteinExistence type="inferred from homology"/>
<comment type="function">
    <text evidence="1">Catalyzes the ATP-dependent conversion of 7-carboxy-7-deazaguanine (CDG) to 7-cyano-7-deazaguanine (preQ(0)).</text>
</comment>
<comment type="catalytic activity">
    <reaction evidence="1">
        <text>7-carboxy-7-deazaguanine + NH4(+) + ATP = 7-cyano-7-deazaguanine + ADP + phosphate + H2O + H(+)</text>
        <dbReference type="Rhea" id="RHEA:27982"/>
        <dbReference type="ChEBI" id="CHEBI:15377"/>
        <dbReference type="ChEBI" id="CHEBI:15378"/>
        <dbReference type="ChEBI" id="CHEBI:28938"/>
        <dbReference type="ChEBI" id="CHEBI:30616"/>
        <dbReference type="ChEBI" id="CHEBI:43474"/>
        <dbReference type="ChEBI" id="CHEBI:45075"/>
        <dbReference type="ChEBI" id="CHEBI:61036"/>
        <dbReference type="ChEBI" id="CHEBI:456216"/>
        <dbReference type="EC" id="6.3.4.20"/>
    </reaction>
</comment>
<comment type="cofactor">
    <cofactor evidence="1">
        <name>Zn(2+)</name>
        <dbReference type="ChEBI" id="CHEBI:29105"/>
    </cofactor>
    <text evidence="1">Binds 1 zinc ion per subunit.</text>
</comment>
<comment type="pathway">
    <text evidence="1">Purine metabolism; 7-cyano-7-deazaguanine biosynthesis.</text>
</comment>
<comment type="similarity">
    <text evidence="1">Belongs to the QueC family.</text>
</comment>
<reference key="1">
    <citation type="journal article" date="2008" name="Genomics">
        <title>Characterization of ST-4821 complex, a unique Neisseria meningitidis clone.</title>
        <authorList>
            <person name="Peng J."/>
            <person name="Yang L."/>
            <person name="Yang F."/>
            <person name="Yang J."/>
            <person name="Yan Y."/>
            <person name="Nie H."/>
            <person name="Zhang X."/>
            <person name="Xiong Z."/>
            <person name="Jiang Y."/>
            <person name="Cheng F."/>
            <person name="Xu X."/>
            <person name="Chen S."/>
            <person name="Sun L."/>
            <person name="Li W."/>
            <person name="Shen Y."/>
            <person name="Shao Z."/>
            <person name="Liang X."/>
            <person name="Xu J."/>
            <person name="Jin Q."/>
        </authorList>
    </citation>
    <scope>NUCLEOTIDE SEQUENCE [LARGE SCALE GENOMIC DNA]</scope>
    <source>
        <strain>053442</strain>
    </source>
</reference>
<evidence type="ECO:0000255" key="1">
    <source>
        <dbReference type="HAMAP-Rule" id="MF_01633"/>
    </source>
</evidence>
<protein>
    <recommendedName>
        <fullName evidence="1">7-cyano-7-deazaguanine synthase</fullName>
        <ecNumber evidence="1">6.3.4.20</ecNumber>
    </recommendedName>
    <alternativeName>
        <fullName evidence="1">7-cyano-7-carbaguanine synthase</fullName>
    </alternativeName>
    <alternativeName>
        <fullName evidence="1">PreQ(0) synthase</fullName>
    </alternativeName>
    <alternativeName>
        <fullName evidence="1">Queuosine biosynthesis protein QueC</fullName>
    </alternativeName>
</protein>
<keyword id="KW-0067">ATP-binding</keyword>
<keyword id="KW-0436">Ligase</keyword>
<keyword id="KW-0479">Metal-binding</keyword>
<keyword id="KW-0547">Nucleotide-binding</keyword>
<keyword id="KW-0671">Queuosine biosynthesis</keyword>
<keyword id="KW-0862">Zinc</keyword>
<dbReference type="EC" id="6.3.4.20" evidence="1"/>
<dbReference type="EMBL" id="CP000381">
    <property type="protein sequence ID" value="ABX72664.1"/>
    <property type="molecule type" value="Genomic_DNA"/>
</dbReference>
<dbReference type="RefSeq" id="WP_012221332.1">
    <property type="nucleotide sequence ID" value="NC_010120.1"/>
</dbReference>
<dbReference type="SMR" id="A9M1Y9"/>
<dbReference type="KEGG" id="nmn:NMCC_0462"/>
<dbReference type="HOGENOM" id="CLU_081854_0_0_4"/>
<dbReference type="UniPathway" id="UPA00391"/>
<dbReference type="Proteomes" id="UP000001177">
    <property type="component" value="Chromosome"/>
</dbReference>
<dbReference type="GO" id="GO:0005524">
    <property type="term" value="F:ATP binding"/>
    <property type="evidence" value="ECO:0007669"/>
    <property type="project" value="UniProtKB-UniRule"/>
</dbReference>
<dbReference type="GO" id="GO:0016879">
    <property type="term" value="F:ligase activity, forming carbon-nitrogen bonds"/>
    <property type="evidence" value="ECO:0007669"/>
    <property type="project" value="UniProtKB-UniRule"/>
</dbReference>
<dbReference type="GO" id="GO:0008270">
    <property type="term" value="F:zinc ion binding"/>
    <property type="evidence" value="ECO:0007669"/>
    <property type="project" value="UniProtKB-UniRule"/>
</dbReference>
<dbReference type="GO" id="GO:0008616">
    <property type="term" value="P:queuosine biosynthetic process"/>
    <property type="evidence" value="ECO:0007669"/>
    <property type="project" value="UniProtKB-UniRule"/>
</dbReference>
<dbReference type="CDD" id="cd01995">
    <property type="entry name" value="QueC-like"/>
    <property type="match status" value="1"/>
</dbReference>
<dbReference type="FunFam" id="3.40.50.620:FF:000017">
    <property type="entry name" value="7-cyano-7-deazaguanine synthase"/>
    <property type="match status" value="1"/>
</dbReference>
<dbReference type="Gene3D" id="3.40.50.620">
    <property type="entry name" value="HUPs"/>
    <property type="match status" value="1"/>
</dbReference>
<dbReference type="HAMAP" id="MF_01633">
    <property type="entry name" value="QueC"/>
    <property type="match status" value="1"/>
</dbReference>
<dbReference type="InterPro" id="IPR018317">
    <property type="entry name" value="QueC"/>
</dbReference>
<dbReference type="InterPro" id="IPR014729">
    <property type="entry name" value="Rossmann-like_a/b/a_fold"/>
</dbReference>
<dbReference type="NCBIfam" id="TIGR00364">
    <property type="entry name" value="7-cyano-7-deazaguanine synthase QueC"/>
    <property type="match status" value="1"/>
</dbReference>
<dbReference type="PANTHER" id="PTHR42914">
    <property type="entry name" value="7-CYANO-7-DEAZAGUANINE SYNTHASE"/>
    <property type="match status" value="1"/>
</dbReference>
<dbReference type="PANTHER" id="PTHR42914:SF1">
    <property type="entry name" value="7-CYANO-7-DEAZAGUANINE SYNTHASE"/>
    <property type="match status" value="1"/>
</dbReference>
<dbReference type="Pfam" id="PF06508">
    <property type="entry name" value="QueC"/>
    <property type="match status" value="1"/>
</dbReference>
<dbReference type="PIRSF" id="PIRSF006293">
    <property type="entry name" value="ExsB"/>
    <property type="match status" value="1"/>
</dbReference>
<dbReference type="SUPFAM" id="SSF52402">
    <property type="entry name" value="Adenine nucleotide alpha hydrolases-like"/>
    <property type="match status" value="1"/>
</dbReference>
<sequence length="220" mass="24516">MSNQQALVIFSGGQDSTTCLIQAIQTYGRENVQAITFQYGQRHAVELERARWIAQDLGIKQTVLDLSLMRQITHNALMDDTAAIETAENGVPNTFVDGRNALFLLYAAIYAKGQGIRHIIAGVCETDFSGYPDCRDVFVKSMNVTLNLAMDYDFQIHTPLMYLTKAQTWALADEMGALDYIREQTHTCYNGIVGGGCRECPSCILRERGLAEYLESKKAV</sequence>
<gene>
    <name evidence="1" type="primary">queC</name>
    <name type="ordered locus">NMCC_0462</name>
</gene>